<proteinExistence type="inferred from homology"/>
<accession>Q8U0B3</accession>
<feature type="chain" id="PRO_0000185347" description="Putative [LysW]-lysine/[LysW]-ornithine hydrolase">
    <location>
        <begin position="1"/>
        <end position="326"/>
    </location>
</feature>
<feature type="active site" evidence="1">
    <location>
        <position position="68"/>
    </location>
</feature>
<feature type="active site" description="Proton acceptor" evidence="1">
    <location>
        <position position="117"/>
    </location>
</feature>
<feature type="binding site" evidence="1">
    <location>
        <position position="66"/>
    </location>
    <ligand>
        <name>Zn(2+)</name>
        <dbReference type="ChEBI" id="CHEBI:29105"/>
        <label>1</label>
    </ligand>
</feature>
<feature type="binding site" evidence="1">
    <location>
        <position position="90"/>
    </location>
    <ligand>
        <name>Zn(2+)</name>
        <dbReference type="ChEBI" id="CHEBI:29105"/>
        <label>1</label>
    </ligand>
</feature>
<feature type="binding site" evidence="1">
    <location>
        <position position="90"/>
    </location>
    <ligand>
        <name>Zn(2+)</name>
        <dbReference type="ChEBI" id="CHEBI:29105"/>
        <label>2</label>
    </ligand>
</feature>
<feature type="binding site" evidence="1">
    <location>
        <position position="118"/>
    </location>
    <ligand>
        <name>Zn(2+)</name>
        <dbReference type="ChEBI" id="CHEBI:29105"/>
        <label>2</label>
    </ligand>
</feature>
<feature type="binding site" evidence="1">
    <location>
        <position position="139"/>
    </location>
    <ligand>
        <name>Zn(2+)</name>
        <dbReference type="ChEBI" id="CHEBI:29105"/>
        <label>1</label>
    </ligand>
</feature>
<feature type="binding site" evidence="1">
    <location>
        <position position="297"/>
    </location>
    <ligand>
        <name>Zn(2+)</name>
        <dbReference type="ChEBI" id="CHEBI:29105"/>
        <label>2</label>
    </ligand>
</feature>
<sequence>MISTEEKIEFLKRLVEIYSPTGKENGVAKFLIKSFENYGIEAYLDDVGNVIAVKKGKGPLILLAGHMDTVPGYIPVRIENGELWGRGAVDAKGPLATFFFATIESDANIIFAGLVDEEGFSKGAKNLEVPKPDYIIVGEPSGTNGVTIGYKGSLTVKFTETVEKVHGSIGVGAAEKLIEKWLTIAKYFGEGFNSLSGRIVKFVAYEREFDFFGEMIVNLRTPPGYMPPKEWDIIDFVPAYEVSRTSPLVRAFVRAIRKAGYKPKLKKKTGTADTNILGPKYGVDAIAYGPGDSKLDHTPYERIKLREYLEAIEILKNAILELSSND</sequence>
<name>LYSK_PYRFU</name>
<protein>
    <recommendedName>
        <fullName evidence="1">Putative [LysW]-lysine/[LysW]-ornithine hydrolase</fullName>
        <ecNumber evidence="1">3.5.1.130</ecNumber>
        <ecNumber evidence="1">3.5.1.132</ecNumber>
    </recommendedName>
</protein>
<evidence type="ECO:0000255" key="1">
    <source>
        <dbReference type="HAMAP-Rule" id="MF_01120"/>
    </source>
</evidence>
<comment type="function">
    <text evidence="1">Catalyzes the release of L-lysine from [LysW]-gamma-L-lysine and the release of L-ornithine from [LysW]-L-ornithine.</text>
</comment>
<comment type="catalytic activity">
    <reaction evidence="1">
        <text>[amino-group carrier protein]-C-terminal-gamma-(L-lysyl)-L-glutamate + H2O = [amino-group carrier protein]-C-terminal-L-glutamate + L-lysine</text>
        <dbReference type="Rhea" id="RHEA:48684"/>
        <dbReference type="Rhea" id="RHEA-COMP:9693"/>
        <dbReference type="Rhea" id="RHEA-COMP:9715"/>
        <dbReference type="ChEBI" id="CHEBI:15377"/>
        <dbReference type="ChEBI" id="CHEBI:32551"/>
        <dbReference type="ChEBI" id="CHEBI:78525"/>
        <dbReference type="ChEBI" id="CHEBI:78526"/>
        <dbReference type="EC" id="3.5.1.130"/>
    </reaction>
</comment>
<comment type="catalytic activity">
    <reaction evidence="1">
        <text>[amino-group carrier protein]-C-terminal-gamma-(L-ornithyl)-L-glutamate + H2O = [amino-group carrier protein]-C-terminal-L-glutamate + L-ornithine</text>
        <dbReference type="Rhea" id="RHEA:52676"/>
        <dbReference type="Rhea" id="RHEA-COMP:9693"/>
        <dbReference type="Rhea" id="RHEA-COMP:13328"/>
        <dbReference type="ChEBI" id="CHEBI:15377"/>
        <dbReference type="ChEBI" id="CHEBI:46911"/>
        <dbReference type="ChEBI" id="CHEBI:78525"/>
        <dbReference type="ChEBI" id="CHEBI:136763"/>
        <dbReference type="EC" id="3.5.1.132"/>
    </reaction>
</comment>
<comment type="cofactor">
    <cofactor evidence="1">
        <name>Zn(2+)</name>
        <dbReference type="ChEBI" id="CHEBI:29105"/>
    </cofactor>
    <cofactor evidence="1">
        <name>Co(2+)</name>
        <dbReference type="ChEBI" id="CHEBI:48828"/>
    </cofactor>
    <text evidence="1">Binds 2 Zn(2+) or Co(2+) ions per subunit.</text>
</comment>
<comment type="pathway">
    <text evidence="1">Amino-acid biosynthesis; L-lysine biosynthesis via AAA pathway; L-lysine from L-alpha-aminoadipate (Thermus route): step 5/5.</text>
</comment>
<comment type="pathway">
    <text evidence="1">Amino-acid biosynthesis; L-arginine biosynthesis.</text>
</comment>
<comment type="subcellular location">
    <subcellularLocation>
        <location evidence="1">Cytoplasm</location>
    </subcellularLocation>
</comment>
<comment type="similarity">
    <text evidence="1">Belongs to the peptidase M20A family. LysK subfamily.</text>
</comment>
<keyword id="KW-0028">Amino-acid biosynthesis</keyword>
<keyword id="KW-0055">Arginine biosynthesis</keyword>
<keyword id="KW-0170">Cobalt</keyword>
<keyword id="KW-0963">Cytoplasm</keyword>
<keyword id="KW-0378">Hydrolase</keyword>
<keyword id="KW-0457">Lysine biosynthesis</keyword>
<keyword id="KW-0479">Metal-binding</keyword>
<keyword id="KW-1185">Reference proteome</keyword>
<keyword id="KW-0862">Zinc</keyword>
<reference key="1">
    <citation type="journal article" date="1999" name="Genetics">
        <title>Divergence of the hyperthermophilic archaea Pyrococcus furiosus and P. horikoshii inferred from complete genomic sequences.</title>
        <authorList>
            <person name="Maeder D.L."/>
            <person name="Weiss R.B."/>
            <person name="Dunn D.M."/>
            <person name="Cherry J.L."/>
            <person name="Gonzalez J.M."/>
            <person name="DiRuggiero J."/>
            <person name="Robb F.T."/>
        </authorList>
    </citation>
    <scope>NUCLEOTIDE SEQUENCE [LARGE SCALE GENOMIC DNA]</scope>
    <source>
        <strain>ATCC 43587 / DSM 3638 / JCM 8422 / Vc1</strain>
    </source>
</reference>
<dbReference type="EC" id="3.5.1.130" evidence="1"/>
<dbReference type="EC" id="3.5.1.132" evidence="1"/>
<dbReference type="EMBL" id="AE009950">
    <property type="protein sequence ID" value="AAL81810.1"/>
    <property type="molecule type" value="Genomic_DNA"/>
</dbReference>
<dbReference type="RefSeq" id="WP_011012832.1">
    <property type="nucleotide sequence ID" value="NZ_CP023154.1"/>
</dbReference>
<dbReference type="SMR" id="Q8U0B3"/>
<dbReference type="STRING" id="186497.PF1686"/>
<dbReference type="PaxDb" id="186497-PF1686"/>
<dbReference type="KEGG" id="pfu:PF1686"/>
<dbReference type="PATRIC" id="fig|186497.12.peg.1754"/>
<dbReference type="eggNOG" id="arCOG01107">
    <property type="taxonomic scope" value="Archaea"/>
</dbReference>
<dbReference type="HOGENOM" id="CLU_021802_2_0_2"/>
<dbReference type="OrthoDB" id="24854at2157"/>
<dbReference type="PhylomeDB" id="Q8U0B3"/>
<dbReference type="UniPathway" id="UPA00033">
    <property type="reaction ID" value="UER00039"/>
</dbReference>
<dbReference type="UniPathway" id="UPA00068"/>
<dbReference type="Proteomes" id="UP000001013">
    <property type="component" value="Chromosome"/>
</dbReference>
<dbReference type="GO" id="GO:0005737">
    <property type="term" value="C:cytoplasm"/>
    <property type="evidence" value="ECO:0007669"/>
    <property type="project" value="UniProtKB-SubCell"/>
</dbReference>
<dbReference type="GO" id="GO:0050897">
    <property type="term" value="F:cobalt ion binding"/>
    <property type="evidence" value="ECO:0007669"/>
    <property type="project" value="UniProtKB-UniRule"/>
</dbReference>
<dbReference type="GO" id="GO:0016811">
    <property type="term" value="F:hydrolase activity, acting on carbon-nitrogen (but not peptide) bonds, in linear amides"/>
    <property type="evidence" value="ECO:0007669"/>
    <property type="project" value="UniProtKB-UniRule"/>
</dbReference>
<dbReference type="GO" id="GO:0008270">
    <property type="term" value="F:zinc ion binding"/>
    <property type="evidence" value="ECO:0007669"/>
    <property type="project" value="UniProtKB-UniRule"/>
</dbReference>
<dbReference type="GO" id="GO:0042450">
    <property type="term" value="P:arginine biosynthetic process via ornithine"/>
    <property type="evidence" value="ECO:0007669"/>
    <property type="project" value="UniProtKB-UniRule"/>
</dbReference>
<dbReference type="GO" id="GO:0006526">
    <property type="term" value="P:L-arginine biosynthetic process"/>
    <property type="evidence" value="ECO:0007669"/>
    <property type="project" value="UniProtKB-UniPathway"/>
</dbReference>
<dbReference type="GO" id="GO:0019878">
    <property type="term" value="P:lysine biosynthetic process via aminoadipic acid"/>
    <property type="evidence" value="ECO:0007669"/>
    <property type="project" value="UniProtKB-UniRule"/>
</dbReference>
<dbReference type="Gene3D" id="3.40.630.10">
    <property type="entry name" value="Zn peptidases"/>
    <property type="match status" value="2"/>
</dbReference>
<dbReference type="HAMAP" id="MF_01120">
    <property type="entry name" value="LysK"/>
    <property type="match status" value="1"/>
</dbReference>
<dbReference type="InterPro" id="IPR001261">
    <property type="entry name" value="ArgE/DapE_CS"/>
</dbReference>
<dbReference type="InterPro" id="IPR010175">
    <property type="entry name" value="LysK"/>
</dbReference>
<dbReference type="InterPro" id="IPR002933">
    <property type="entry name" value="Peptidase_M20"/>
</dbReference>
<dbReference type="InterPro" id="IPR050072">
    <property type="entry name" value="Peptidase_M20A"/>
</dbReference>
<dbReference type="InterPro" id="IPR008007">
    <property type="entry name" value="Peptidase_M42"/>
</dbReference>
<dbReference type="NCBIfam" id="TIGR01902">
    <property type="entry name" value="dapE-lys-deAc"/>
    <property type="match status" value="1"/>
</dbReference>
<dbReference type="NCBIfam" id="NF003367">
    <property type="entry name" value="PRK04443.1"/>
    <property type="match status" value="1"/>
</dbReference>
<dbReference type="PANTHER" id="PTHR43808:SF28">
    <property type="entry name" value="[LYSW]-LYSINE_[LYSW]-ORNITHINE HYDROLASE"/>
    <property type="match status" value="1"/>
</dbReference>
<dbReference type="PANTHER" id="PTHR43808">
    <property type="entry name" value="ACETYLORNITHINE DEACETYLASE"/>
    <property type="match status" value="1"/>
</dbReference>
<dbReference type="Pfam" id="PF01546">
    <property type="entry name" value="Peptidase_M20"/>
    <property type="match status" value="1"/>
</dbReference>
<dbReference type="PIRSF" id="PIRSF001123">
    <property type="entry name" value="PepA_GA"/>
    <property type="match status" value="1"/>
</dbReference>
<dbReference type="SUPFAM" id="SSF53187">
    <property type="entry name" value="Zn-dependent exopeptidases"/>
    <property type="match status" value="1"/>
</dbReference>
<dbReference type="PROSITE" id="PS00758">
    <property type="entry name" value="ARGE_DAPE_CPG2_1"/>
    <property type="match status" value="1"/>
</dbReference>
<gene>
    <name evidence="1" type="primary">lysK</name>
    <name type="ordered locus">PF1686</name>
</gene>
<organism>
    <name type="scientific">Pyrococcus furiosus (strain ATCC 43587 / DSM 3638 / JCM 8422 / Vc1)</name>
    <dbReference type="NCBI Taxonomy" id="186497"/>
    <lineage>
        <taxon>Archaea</taxon>
        <taxon>Methanobacteriati</taxon>
        <taxon>Methanobacteriota</taxon>
        <taxon>Thermococci</taxon>
        <taxon>Thermococcales</taxon>
        <taxon>Thermococcaceae</taxon>
        <taxon>Pyrococcus</taxon>
    </lineage>
</organism>